<protein>
    <recommendedName>
        <fullName evidence="1">Large ribosomal subunit protein uL15</fullName>
    </recommendedName>
    <alternativeName>
        <fullName evidence="3">50S ribosomal protein L15</fullName>
    </alternativeName>
</protein>
<dbReference type="EMBL" id="AP009247">
    <property type="protein sequence ID" value="BAF61318.1"/>
    <property type="molecule type" value="Genomic_DNA"/>
</dbReference>
<dbReference type="RefSeq" id="WP_011929588.1">
    <property type="nucleotide sequence ID" value="NC_009465.1"/>
</dbReference>
<dbReference type="SMR" id="A5CXM3"/>
<dbReference type="STRING" id="412965.COSY_0188"/>
<dbReference type="KEGG" id="vok:COSY_0188"/>
<dbReference type="eggNOG" id="COG0200">
    <property type="taxonomic scope" value="Bacteria"/>
</dbReference>
<dbReference type="HOGENOM" id="CLU_055188_4_2_6"/>
<dbReference type="OrthoDB" id="9810293at2"/>
<dbReference type="Proteomes" id="UP000000247">
    <property type="component" value="Chromosome"/>
</dbReference>
<dbReference type="GO" id="GO:0022625">
    <property type="term" value="C:cytosolic large ribosomal subunit"/>
    <property type="evidence" value="ECO:0007669"/>
    <property type="project" value="TreeGrafter"/>
</dbReference>
<dbReference type="GO" id="GO:0019843">
    <property type="term" value="F:rRNA binding"/>
    <property type="evidence" value="ECO:0007669"/>
    <property type="project" value="UniProtKB-UniRule"/>
</dbReference>
<dbReference type="GO" id="GO:0003735">
    <property type="term" value="F:structural constituent of ribosome"/>
    <property type="evidence" value="ECO:0007669"/>
    <property type="project" value="InterPro"/>
</dbReference>
<dbReference type="GO" id="GO:0006412">
    <property type="term" value="P:translation"/>
    <property type="evidence" value="ECO:0007669"/>
    <property type="project" value="UniProtKB-UniRule"/>
</dbReference>
<dbReference type="Gene3D" id="3.100.10.10">
    <property type="match status" value="1"/>
</dbReference>
<dbReference type="HAMAP" id="MF_01341">
    <property type="entry name" value="Ribosomal_uL15"/>
    <property type="match status" value="1"/>
</dbReference>
<dbReference type="InterPro" id="IPR030878">
    <property type="entry name" value="Ribosomal_uL15"/>
</dbReference>
<dbReference type="InterPro" id="IPR021131">
    <property type="entry name" value="Ribosomal_uL15/eL18"/>
</dbReference>
<dbReference type="InterPro" id="IPR036227">
    <property type="entry name" value="Ribosomal_uL15/eL18_sf"/>
</dbReference>
<dbReference type="InterPro" id="IPR005749">
    <property type="entry name" value="Ribosomal_uL15_bac-type"/>
</dbReference>
<dbReference type="NCBIfam" id="TIGR01071">
    <property type="entry name" value="rplO_bact"/>
    <property type="match status" value="1"/>
</dbReference>
<dbReference type="PANTHER" id="PTHR12934">
    <property type="entry name" value="50S RIBOSOMAL PROTEIN L15"/>
    <property type="match status" value="1"/>
</dbReference>
<dbReference type="PANTHER" id="PTHR12934:SF11">
    <property type="entry name" value="LARGE RIBOSOMAL SUBUNIT PROTEIN UL15M"/>
    <property type="match status" value="1"/>
</dbReference>
<dbReference type="Pfam" id="PF00828">
    <property type="entry name" value="Ribosomal_L27A"/>
    <property type="match status" value="1"/>
</dbReference>
<dbReference type="SUPFAM" id="SSF52080">
    <property type="entry name" value="Ribosomal proteins L15p and L18e"/>
    <property type="match status" value="1"/>
</dbReference>
<proteinExistence type="inferred from homology"/>
<name>RL15_VESOH</name>
<evidence type="ECO:0000255" key="1">
    <source>
        <dbReference type="HAMAP-Rule" id="MF_01341"/>
    </source>
</evidence>
<evidence type="ECO:0000256" key="2">
    <source>
        <dbReference type="SAM" id="MobiDB-lite"/>
    </source>
</evidence>
<evidence type="ECO:0000305" key="3"/>
<reference key="1">
    <citation type="journal article" date="2007" name="Curr. Biol.">
        <title>Reduced genome of the thioautotrophic intracellular symbiont in a deep-sea clam, Calyptogena okutanii.</title>
        <authorList>
            <person name="Kuwahara H."/>
            <person name="Yoshida T."/>
            <person name="Takaki Y."/>
            <person name="Shimamura S."/>
            <person name="Nishi S."/>
            <person name="Harada M."/>
            <person name="Matsuyama K."/>
            <person name="Takishita K."/>
            <person name="Kawato M."/>
            <person name="Uematsu K."/>
            <person name="Fujiwara Y."/>
            <person name="Sato T."/>
            <person name="Kato C."/>
            <person name="Kitagawa M."/>
            <person name="Kato I."/>
            <person name="Maruyama T."/>
        </authorList>
    </citation>
    <scope>NUCLEOTIDE SEQUENCE [LARGE SCALE GENOMIC DNA]</scope>
    <source>
        <strain>HA</strain>
    </source>
</reference>
<accession>A5CXM3</accession>
<organism>
    <name type="scientific">Vesicomyosocius okutanii subsp. Calyptogena okutanii (strain HA)</name>
    <dbReference type="NCBI Taxonomy" id="412965"/>
    <lineage>
        <taxon>Bacteria</taxon>
        <taxon>Pseudomonadati</taxon>
        <taxon>Pseudomonadota</taxon>
        <taxon>Gammaproteobacteria</taxon>
        <taxon>Candidatus Pseudothioglobaceae</taxon>
        <taxon>Candidatus Vesicomyosocius</taxon>
    </lineage>
</organism>
<feature type="chain" id="PRO_1000054561" description="Large ribosomal subunit protein uL15">
    <location>
        <begin position="1"/>
        <end position="144"/>
    </location>
</feature>
<feature type="region of interest" description="Disordered" evidence="2">
    <location>
        <begin position="1"/>
        <end position="51"/>
    </location>
</feature>
<feature type="compositionally biased region" description="Gly residues" evidence="2">
    <location>
        <begin position="21"/>
        <end position="35"/>
    </location>
</feature>
<sequence length="144" mass="15421">MQLNTLSPAQGEKKSRKRVGRGIGSGIGKTCGSGHKGQKSRSGGFNKIGFEGGQMPLQRRLPKVGFSSRISIITSQVTLSEINRLTETYITIDVFKAHNLITKNIKRVKVILSGEITRAVTLTGIKVTKGAKLAIEAVKGSVSD</sequence>
<keyword id="KW-1185">Reference proteome</keyword>
<keyword id="KW-0687">Ribonucleoprotein</keyword>
<keyword id="KW-0689">Ribosomal protein</keyword>
<keyword id="KW-0694">RNA-binding</keyword>
<keyword id="KW-0699">rRNA-binding</keyword>
<gene>
    <name evidence="1" type="primary">rplO</name>
    <name type="ordered locus">COSY_0188</name>
</gene>
<comment type="function">
    <text evidence="1">Binds to the 23S rRNA.</text>
</comment>
<comment type="subunit">
    <text evidence="1">Part of the 50S ribosomal subunit.</text>
</comment>
<comment type="similarity">
    <text evidence="1">Belongs to the universal ribosomal protein uL15 family.</text>
</comment>